<gene>
    <name type="ordered locus">Veis_4789</name>
</gene>
<sequence>MLLLLSPAKSLDYATPLPEGWPHSTPCFIAQSSALIALLRSRSPQQIAALMQLSAPLAALNAERYQAWQPRCSASNSRQALLAFDGDVYEGLQARTLSAPDLDWAQQHLAILSGLYGVLRPLDRIQPHRLEMGTRLATAAGGNLYQFWGRQIAEHLNHRLHDDPDPVLVNLASQEYFKAVDRKALNARVVECVFEDFKGGAYKIISFYAKRARGLMARHAITHRLSRPRQLEGFGLGGYAYAPAASDPERLVFRRKSPAA</sequence>
<organism>
    <name type="scientific">Verminephrobacter eiseniae (strain EF01-2)</name>
    <dbReference type="NCBI Taxonomy" id="391735"/>
    <lineage>
        <taxon>Bacteria</taxon>
        <taxon>Pseudomonadati</taxon>
        <taxon>Pseudomonadota</taxon>
        <taxon>Betaproteobacteria</taxon>
        <taxon>Burkholderiales</taxon>
        <taxon>Comamonadaceae</taxon>
        <taxon>Verminephrobacter</taxon>
    </lineage>
</organism>
<evidence type="ECO:0000255" key="1">
    <source>
        <dbReference type="HAMAP-Rule" id="MF_00652"/>
    </source>
</evidence>
<proteinExistence type="inferred from homology"/>
<name>Y4789_VEREI</name>
<protein>
    <recommendedName>
        <fullName evidence="1">UPF0246 protein Veis_4789</fullName>
    </recommendedName>
</protein>
<dbReference type="EMBL" id="CP000542">
    <property type="protein sequence ID" value="ABM60481.1"/>
    <property type="molecule type" value="Genomic_DNA"/>
</dbReference>
<dbReference type="RefSeq" id="WP_011812459.1">
    <property type="nucleotide sequence ID" value="NC_008786.1"/>
</dbReference>
<dbReference type="SMR" id="A1WS74"/>
<dbReference type="STRING" id="391735.Veis_4789"/>
<dbReference type="GeneID" id="76463055"/>
<dbReference type="KEGG" id="vei:Veis_4789"/>
<dbReference type="eggNOG" id="COG3022">
    <property type="taxonomic scope" value="Bacteria"/>
</dbReference>
<dbReference type="HOGENOM" id="CLU_061989_0_0_4"/>
<dbReference type="OrthoDB" id="9777133at2"/>
<dbReference type="Proteomes" id="UP000000374">
    <property type="component" value="Chromosome"/>
</dbReference>
<dbReference type="GO" id="GO:0005829">
    <property type="term" value="C:cytosol"/>
    <property type="evidence" value="ECO:0007669"/>
    <property type="project" value="TreeGrafter"/>
</dbReference>
<dbReference type="GO" id="GO:0033194">
    <property type="term" value="P:response to hydroperoxide"/>
    <property type="evidence" value="ECO:0007669"/>
    <property type="project" value="TreeGrafter"/>
</dbReference>
<dbReference type="HAMAP" id="MF_00652">
    <property type="entry name" value="UPF0246"/>
    <property type="match status" value="1"/>
</dbReference>
<dbReference type="InterPro" id="IPR005583">
    <property type="entry name" value="YaaA"/>
</dbReference>
<dbReference type="NCBIfam" id="NF002542">
    <property type="entry name" value="PRK02101.1-3"/>
    <property type="match status" value="1"/>
</dbReference>
<dbReference type="PANTHER" id="PTHR30283:SF4">
    <property type="entry name" value="PEROXIDE STRESS RESISTANCE PROTEIN YAAA"/>
    <property type="match status" value="1"/>
</dbReference>
<dbReference type="PANTHER" id="PTHR30283">
    <property type="entry name" value="PEROXIDE STRESS RESPONSE PROTEIN YAAA"/>
    <property type="match status" value="1"/>
</dbReference>
<dbReference type="Pfam" id="PF03883">
    <property type="entry name" value="H2O2_YaaD"/>
    <property type="match status" value="1"/>
</dbReference>
<reference key="1">
    <citation type="submission" date="2006-12" db="EMBL/GenBank/DDBJ databases">
        <title>Complete sequence of chromosome 1 of Verminephrobacter eiseniae EF01-2.</title>
        <authorList>
            <person name="Copeland A."/>
            <person name="Lucas S."/>
            <person name="Lapidus A."/>
            <person name="Barry K."/>
            <person name="Detter J.C."/>
            <person name="Glavina del Rio T."/>
            <person name="Dalin E."/>
            <person name="Tice H."/>
            <person name="Pitluck S."/>
            <person name="Chertkov O."/>
            <person name="Brettin T."/>
            <person name="Bruce D."/>
            <person name="Han C."/>
            <person name="Tapia R."/>
            <person name="Gilna P."/>
            <person name="Schmutz J."/>
            <person name="Larimer F."/>
            <person name="Land M."/>
            <person name="Hauser L."/>
            <person name="Kyrpides N."/>
            <person name="Kim E."/>
            <person name="Stahl D."/>
            <person name="Richardson P."/>
        </authorList>
    </citation>
    <scope>NUCLEOTIDE SEQUENCE [LARGE SCALE GENOMIC DNA]</scope>
    <source>
        <strain>EF01-2</strain>
    </source>
</reference>
<comment type="similarity">
    <text evidence="1">Belongs to the UPF0246 family.</text>
</comment>
<feature type="chain" id="PRO_1000061644" description="UPF0246 protein Veis_4789">
    <location>
        <begin position="1"/>
        <end position="260"/>
    </location>
</feature>
<keyword id="KW-1185">Reference proteome</keyword>
<accession>A1WS74</accession>